<evidence type="ECO:0000255" key="1">
    <source>
        <dbReference type="PROSITE-ProRule" id="PRU00258"/>
    </source>
</evidence>
<evidence type="ECO:0000269" key="2">
    <source>
    </source>
</evidence>
<evidence type="ECO:0000303" key="3">
    <source>
    </source>
</evidence>
<evidence type="ECO:0000305" key="4"/>
<evidence type="ECO:0000305" key="5">
    <source>
    </source>
</evidence>
<evidence type="ECO:0000312" key="6">
    <source>
        <dbReference type="EMBL" id="ABJ13498.1"/>
    </source>
</evidence>
<feature type="chain" id="PRO_0000454827" description="Pyochelin synthetase PchF">
    <location>
        <begin position="1"/>
        <end position="1809"/>
    </location>
</feature>
<feature type="domain" description="Carrier" evidence="1">
    <location>
        <begin position="1407"/>
        <end position="1488"/>
    </location>
</feature>
<feature type="region of interest" description="Condensation/cyclization" evidence="4">
    <location>
        <begin position="69"/>
        <end position="490"/>
    </location>
</feature>
<feature type="region of interest" description="Adenylation" evidence="4">
    <location>
        <begin position="520"/>
        <end position="915"/>
    </location>
</feature>
<feature type="region of interest" description="Thioesterase" evidence="4">
    <location>
        <begin position="1584"/>
        <end position="1797"/>
    </location>
</feature>
<feature type="modified residue" description="O-(pantetheine 4'-phosphoryl)serine" evidence="1">
    <location>
        <position position="1442"/>
    </location>
</feature>
<feature type="mutagenesis site" description="Fails to release HPTT-COOH." evidence="2">
    <original>CS</original>
    <variation>AA</variation>
    <location>
        <begin position="1606"/>
        <end position="1607"/>
    </location>
</feature>
<sequence>MSLGELLETCRSRRIELWSEAGRLRYRAPQGALDAGLAERLRAEREALLEHLEGGPGWRAEPDLAHQRFPLTPVQAAYVLGRQAAFDYGGNACQLYAEYDWPADTDPARLEAAWNAMVERHPMLRAVIEDNAWQRVLPEVPWQRLTVHACAGLDEAAFQAHLERVRERLDHACAALDQWPVLRPELSIGRDDCVLHCSVDFTLVDYASLQLLLGEWRRRYLDPQWTAEPLEATFRDYVGVEQRRRQSPAWQRDRDWWLARLDALPGRPDLPLRAQPDTRSTRFRHFHARLDEAAWQALGARAGEHGLSAAGVALAAFAETIGRWSQAPAFCLNLTVLNRPPLHPQLAQVLGDFTALSLLAVDSRHGDSFVERARRIGEQMFDDLDHPTFSGVDLLRELARRRGRGADLMPVVFTSGIGSVQRLLGDGEAPRAPRYMISQTPQVWLDCQVTDQFGGLEIGWDVRLGLFPEGQAEAMFDDFVGLLRRLAQSPRAWTDGDATEPVEAPPQALPGSARSIAAGFAERALLTPDATVIHDAAGSYSYRQVAQHASALRRVLEAHGAGRGRRVAVMLPKSAAQLVAVIGILQAGAAYVPVDIRQPPLRRQAILASPEVVAWVCLESDVPNAGCACVAIDRLAADSAWPPPPAAEVAADDLAYVIYTSGSTGTPKGVMLSHAAVSNTLLDINQRYGVDANDRVLGLAELSFDLSVYDFFGATAAGAQVVLPDPARGSDPSHWAELLERHAITLWNSVPAQGQMLIDYLESEPQRHLPGPRCVLWSGDWIPVSLPTRWWRRWPDSALFSLGGATEAAIWSIEQPIRPQHTELASIPYGRALRGQSVEVLDARGRRCPPGVRGEIHIGGVGLALGYAGDPQRTAERFVRHPDGRRLYRTGDLGRYLADGSIEFLGREDDQVKIRGHRIELAELDAALCAHPQVNLAATVVLGETHERSLASFVTLHAPAEAGEDPRTALDTVRQRAAQALRRDWGSEEGIAAAVAALDRACLASLAAWLAGSGLFASATPLDFATLCQRLGIAEARQRLLRHWLRQLEEGGYLRAEGEGWLGCAERPAQSPEDAWTAFAGCAPAALWPAELVAYLRDSAQSLGEQLAGRISPAALMFPQGSARIAEAMYSQGLHAQALHEAMAEAIAAIVERQPQRRWRLLELGAGTAAASRAVIARLAPLVQRGTEVDYLFTDVSSYFLAAARERFADQPWVRFGRFDMNGDLLDQGVAPHSVDILLSSGALNNALDTPALLAGLRELLSADAWLVIQELTREHNEISVSQSLMMENPRDLRDERRQLFVHTGQWLEWLAAQGGDLACGVVPPGSALDLLGYDVLLARCKTDRARLEPAELLAFVEARVPRYMLPAQLRVLERLPVTGNGKIDRKALTGFARQPQADLRHGVAQAPADELESALLALWREVLDNPSLGVEQDFFGAGGDSLLIAQLIARLRERLESARRHPFDRLLRWALSQPTPRGLAERLRSAPEEGRGPALAAARGVAPAQTGMSRAPLAEGAVALDPLVRLVPGEGVPRVLVHEGLGTLLPYRPLLRALGEGRPLLGLAVHDSDAYLAIPAEYLNACLGRRYAEALHGAGLREVDLLGYCSGGLVALETAKSLLQRGVRVRQLDIVSSYRIPYRVDDERLLLFSFAATLGLDTAALGFPAPERLGQAVQAALAQTPERLGAEALAGLPGLADLVALRGRVLQAASGSADAASVERDTLYRLFCHSVRASQAEALEPYVGALRLFVPDAGNPLVPRYAEALETQWRAAALGACGIHEVPGGHFDCLGEALAQSLSKPMPEEASQ</sequence>
<reference key="1">
    <citation type="journal article" date="2006" name="Genome Biol.">
        <title>Genomic analysis reveals that Pseudomonas aeruginosa virulence is combinatorial.</title>
        <authorList>
            <person name="Lee D.G."/>
            <person name="Urbach J.M."/>
            <person name="Wu G."/>
            <person name="Liberati N.T."/>
            <person name="Feinbaum R.L."/>
            <person name="Miyata S."/>
            <person name="Diggins L.T."/>
            <person name="He J."/>
            <person name="Saucier M."/>
            <person name="Deziel E."/>
            <person name="Friedman L."/>
            <person name="Li L."/>
            <person name="Grills G."/>
            <person name="Montgomery K."/>
            <person name="Kucherlapati R."/>
            <person name="Rahme L.G."/>
            <person name="Ausubel F.M."/>
        </authorList>
    </citation>
    <scope>NUCLEOTIDE SEQUENCE [LARGE SCALE GENOMIC DNA]</scope>
    <source>
        <strain>UCBPP-PA14</strain>
    </source>
</reference>
<reference key="2">
    <citation type="journal article" date="1999" name="Biochemistry">
        <title>Assembly of the Pseudomonas aeruginosa nonribosomal peptide siderophore pyochelin: In vitro reconstitution of aryl-4, 2-bisthiazoline synthetase activity from PchD, PchE, and PchF.</title>
        <authorList>
            <person name="Quadri L.E."/>
            <person name="Keating T.A."/>
            <person name="Patel H.M."/>
            <person name="Walsh C.T."/>
        </authorList>
    </citation>
    <scope>FUNCTION</scope>
    <scope>CATALYTIC ACTIVITY</scope>
    <scope>COFACTOR</scope>
    <scope>BIOPHYSICOCHEMICAL PROPERTIES</scope>
    <scope>PATHWAY</scope>
    <scope>DOMAIN</scope>
    <scope>MUTAGENESIS OF 1606-CYS-SER-1607</scope>
    <source>
        <strain>UCBPP-PA14</strain>
    </source>
</reference>
<dbReference type="EC" id="6.2.1.69" evidence="2"/>
<dbReference type="EMBL" id="CP000438">
    <property type="protein sequence ID" value="ABJ13498.1"/>
    <property type="molecule type" value="Genomic_DNA"/>
</dbReference>
<dbReference type="RefSeq" id="WP_011666540.1">
    <property type="nucleotide sequence ID" value="NC_008463.1"/>
</dbReference>
<dbReference type="SMR" id="A0A0H2ZGJ4"/>
<dbReference type="ESTHER" id="pseae-PCHF">
    <property type="family name" value="Thioesterase"/>
</dbReference>
<dbReference type="KEGG" id="pau:PA14_09280"/>
<dbReference type="HOGENOM" id="CLU_000022_2_15_6"/>
<dbReference type="BioCyc" id="PAER208963:G1G74-774-MONOMER"/>
<dbReference type="Proteomes" id="UP000000653">
    <property type="component" value="Chromosome"/>
</dbReference>
<dbReference type="GO" id="GO:0005737">
    <property type="term" value="C:cytoplasm"/>
    <property type="evidence" value="ECO:0007669"/>
    <property type="project" value="TreeGrafter"/>
</dbReference>
<dbReference type="GO" id="GO:0016874">
    <property type="term" value="F:ligase activity"/>
    <property type="evidence" value="ECO:0007669"/>
    <property type="project" value="UniProtKB-KW"/>
</dbReference>
<dbReference type="GO" id="GO:0031177">
    <property type="term" value="F:phosphopantetheine binding"/>
    <property type="evidence" value="ECO:0007669"/>
    <property type="project" value="TreeGrafter"/>
</dbReference>
<dbReference type="GO" id="GO:0043041">
    <property type="term" value="P:amino acid activation for nonribosomal peptide biosynthetic process"/>
    <property type="evidence" value="ECO:0007669"/>
    <property type="project" value="TreeGrafter"/>
</dbReference>
<dbReference type="GO" id="GO:0009403">
    <property type="term" value="P:toxin biosynthetic process"/>
    <property type="evidence" value="ECO:0007669"/>
    <property type="project" value="UniProtKB-ARBA"/>
</dbReference>
<dbReference type="CDD" id="cd12114">
    <property type="entry name" value="A_NRPS_TlmIV_like"/>
    <property type="match status" value="1"/>
</dbReference>
<dbReference type="CDD" id="cd19535">
    <property type="entry name" value="Cyc_NRPS"/>
    <property type="match status" value="1"/>
</dbReference>
<dbReference type="FunFam" id="1.10.1200.10:FF:000016">
    <property type="entry name" value="Non-ribosomal peptide synthase"/>
    <property type="match status" value="1"/>
</dbReference>
<dbReference type="FunFam" id="3.30.559.10:FF:000023">
    <property type="entry name" value="Non-ribosomal peptide synthetase"/>
    <property type="match status" value="1"/>
</dbReference>
<dbReference type="FunFam" id="3.40.50.12780:FF:000012">
    <property type="entry name" value="Non-ribosomal peptide synthetase"/>
    <property type="match status" value="1"/>
</dbReference>
<dbReference type="FunFam" id="3.30.559.30:FF:000006">
    <property type="entry name" value="Yersiniabactin polyketide/non-ribosomal peptide synthetase"/>
    <property type="match status" value="1"/>
</dbReference>
<dbReference type="Gene3D" id="3.30.300.30">
    <property type="match status" value="2"/>
</dbReference>
<dbReference type="Gene3D" id="1.10.1200.10">
    <property type="entry name" value="ACP-like"/>
    <property type="match status" value="1"/>
</dbReference>
<dbReference type="Gene3D" id="3.40.50.1820">
    <property type="entry name" value="alpha/beta hydrolase"/>
    <property type="match status" value="1"/>
</dbReference>
<dbReference type="Gene3D" id="3.30.559.10">
    <property type="entry name" value="Chloramphenicol acetyltransferase-like domain"/>
    <property type="match status" value="1"/>
</dbReference>
<dbReference type="Gene3D" id="3.40.50.12780">
    <property type="entry name" value="N-terminal domain of ligase-like"/>
    <property type="match status" value="1"/>
</dbReference>
<dbReference type="Gene3D" id="1.10.10.1830">
    <property type="entry name" value="Non-ribosomal peptide synthase, adenylation domain"/>
    <property type="match status" value="1"/>
</dbReference>
<dbReference type="Gene3D" id="3.30.559.30">
    <property type="entry name" value="Nonribosomal peptide synthetase, condensation domain"/>
    <property type="match status" value="1"/>
</dbReference>
<dbReference type="Gene3D" id="3.40.50.150">
    <property type="entry name" value="Vaccinia Virus protein VP39"/>
    <property type="match status" value="1"/>
</dbReference>
<dbReference type="InterPro" id="IPR010071">
    <property type="entry name" value="AA_adenyl_dom"/>
</dbReference>
<dbReference type="InterPro" id="IPR029058">
    <property type="entry name" value="AB_hydrolase_fold"/>
</dbReference>
<dbReference type="InterPro" id="IPR036736">
    <property type="entry name" value="ACP-like_sf"/>
</dbReference>
<dbReference type="InterPro" id="IPR045851">
    <property type="entry name" value="AMP-bd_C_sf"/>
</dbReference>
<dbReference type="InterPro" id="IPR020459">
    <property type="entry name" value="AMP-binding"/>
</dbReference>
<dbReference type="InterPro" id="IPR020845">
    <property type="entry name" value="AMP-binding_CS"/>
</dbReference>
<dbReference type="InterPro" id="IPR000873">
    <property type="entry name" value="AMP-dep_synth/lig_dom"/>
</dbReference>
<dbReference type="InterPro" id="IPR042099">
    <property type="entry name" value="ANL_N_sf"/>
</dbReference>
<dbReference type="InterPro" id="IPR023213">
    <property type="entry name" value="CAT-like_dom_sf"/>
</dbReference>
<dbReference type="InterPro" id="IPR001242">
    <property type="entry name" value="Condensatn"/>
</dbReference>
<dbReference type="InterPro" id="IPR013217">
    <property type="entry name" value="Methyltransf_12"/>
</dbReference>
<dbReference type="InterPro" id="IPR009081">
    <property type="entry name" value="PP-bd_ACP"/>
</dbReference>
<dbReference type="InterPro" id="IPR006162">
    <property type="entry name" value="Ppantetheine_attach_site"/>
</dbReference>
<dbReference type="InterPro" id="IPR029063">
    <property type="entry name" value="SAM-dependent_MTases_sf"/>
</dbReference>
<dbReference type="InterPro" id="IPR041464">
    <property type="entry name" value="TubC_N"/>
</dbReference>
<dbReference type="InterPro" id="IPR044894">
    <property type="entry name" value="TubC_N_sf"/>
</dbReference>
<dbReference type="NCBIfam" id="TIGR01733">
    <property type="entry name" value="AA-adenyl-dom"/>
    <property type="match status" value="1"/>
</dbReference>
<dbReference type="PANTHER" id="PTHR45527">
    <property type="entry name" value="NONRIBOSOMAL PEPTIDE SYNTHETASE"/>
    <property type="match status" value="1"/>
</dbReference>
<dbReference type="PANTHER" id="PTHR45527:SF10">
    <property type="entry name" value="PYOCHELIN SYNTHASE PCHF"/>
    <property type="match status" value="1"/>
</dbReference>
<dbReference type="Pfam" id="PF00501">
    <property type="entry name" value="AMP-binding"/>
    <property type="match status" value="1"/>
</dbReference>
<dbReference type="Pfam" id="PF00668">
    <property type="entry name" value="Condensation"/>
    <property type="match status" value="1"/>
</dbReference>
<dbReference type="Pfam" id="PF08242">
    <property type="entry name" value="Methyltransf_12"/>
    <property type="match status" value="1"/>
</dbReference>
<dbReference type="Pfam" id="PF00550">
    <property type="entry name" value="PP-binding"/>
    <property type="match status" value="1"/>
</dbReference>
<dbReference type="Pfam" id="PF18563">
    <property type="entry name" value="TubC_N"/>
    <property type="match status" value="1"/>
</dbReference>
<dbReference type="PRINTS" id="PR00154">
    <property type="entry name" value="AMPBINDING"/>
</dbReference>
<dbReference type="SUPFAM" id="SSF56801">
    <property type="entry name" value="Acetyl-CoA synthetase-like"/>
    <property type="match status" value="1"/>
</dbReference>
<dbReference type="SUPFAM" id="SSF47336">
    <property type="entry name" value="ACP-like"/>
    <property type="match status" value="1"/>
</dbReference>
<dbReference type="SUPFAM" id="SSF53474">
    <property type="entry name" value="alpha/beta-Hydrolases"/>
    <property type="match status" value="1"/>
</dbReference>
<dbReference type="SUPFAM" id="SSF52777">
    <property type="entry name" value="CoA-dependent acyltransferases"/>
    <property type="match status" value="2"/>
</dbReference>
<dbReference type="SUPFAM" id="SSF53335">
    <property type="entry name" value="S-adenosyl-L-methionine-dependent methyltransferases"/>
    <property type="match status" value="1"/>
</dbReference>
<dbReference type="PROSITE" id="PS00455">
    <property type="entry name" value="AMP_BINDING"/>
    <property type="match status" value="1"/>
</dbReference>
<dbReference type="PROSITE" id="PS50075">
    <property type="entry name" value="CARRIER"/>
    <property type="match status" value="1"/>
</dbReference>
<dbReference type="PROSITE" id="PS00012">
    <property type="entry name" value="PHOSPHOPANTETHEINE"/>
    <property type="match status" value="1"/>
</dbReference>
<protein>
    <recommendedName>
        <fullName evidence="4">Pyochelin synthetase PchF</fullName>
        <ecNumber evidence="2">6.2.1.69</ecNumber>
    </recommendedName>
    <alternativeName>
        <fullName evidence="4">L-cysteine--[L-cysteinyl-carrier protein] ligase</fullName>
    </alternativeName>
    <alternativeName>
        <fullName evidence="4">Nonribosomal peptide synthetase PchF</fullName>
    </alternativeName>
</protein>
<gene>
    <name evidence="3" type="primary">pchF</name>
    <name evidence="6" type="ordered locus">PA14_09280</name>
</gene>
<organism>
    <name type="scientific">Pseudomonas aeruginosa (strain UCBPP-PA14)</name>
    <dbReference type="NCBI Taxonomy" id="208963"/>
    <lineage>
        <taxon>Bacteria</taxon>
        <taxon>Pseudomonadati</taxon>
        <taxon>Pseudomonadota</taxon>
        <taxon>Gammaproteobacteria</taxon>
        <taxon>Pseudomonadales</taxon>
        <taxon>Pseudomonadaceae</taxon>
        <taxon>Pseudomonas</taxon>
    </lineage>
</organism>
<keyword id="KW-0436">Ligase</keyword>
<keyword id="KW-0596">Phosphopantetheine</keyword>
<keyword id="KW-0597">Phosphoprotein</keyword>
<comment type="function">
    <text evidence="2">Involved in the biosynthesis of the siderophore pyochelin (PubMed:10555976). Adenylates L-cysteine and loads it onto its peptidyl carrier domain via a thioester linkage to the phosphopanthetheine moiety (PubMed:10555976). Then forms a peptide bond between the salicyl-thiazolinyl intermediate bound to the second carrier domain of PchE and the cysteine bound to its own peptidyl carrier domain to form the salicyl-thiazolinyl-cysteinyl-S-PCP2 intermediate. It subsequently cyclizes the C-terminal cysteine to form the second thiazoline heterocycle in the salicyl-thiazolinyl-thiazolinyl-S-PCP2 intermediate (PubMed:10555976). When this intermediate is released by the action of a thioesterase, it produces the tricyclic acid hydroxyphenyl-thiazolyl-thiazolinyl-carboxylic acid (HPTT-COOH), an advanced intermediate containing the aryl-4,2-bis-heterocyclic skeleton of the bithiazoline class of siderophores (PubMed:10555976).</text>
</comment>
<comment type="catalytic activity">
    <reaction evidence="2">
        <text>holo-[peptidyl-carrier protein] + L-cysteine + ATP = L-cysteinyl-[peptidyl-carrier protein] + AMP + diphosphate</text>
        <dbReference type="Rhea" id="RHEA:61680"/>
        <dbReference type="Rhea" id="RHEA-COMP:11480"/>
        <dbReference type="Rhea" id="RHEA-COMP:15906"/>
        <dbReference type="ChEBI" id="CHEBI:30616"/>
        <dbReference type="ChEBI" id="CHEBI:33019"/>
        <dbReference type="ChEBI" id="CHEBI:35235"/>
        <dbReference type="ChEBI" id="CHEBI:64479"/>
        <dbReference type="ChEBI" id="CHEBI:144926"/>
        <dbReference type="ChEBI" id="CHEBI:456215"/>
        <dbReference type="EC" id="6.2.1.69"/>
    </reaction>
    <physiologicalReaction direction="left-to-right" evidence="2">
        <dbReference type="Rhea" id="RHEA:61681"/>
    </physiologicalReaction>
</comment>
<comment type="cofactor">
    <cofactor evidence="2">
        <name>pantetheine 4'-phosphate</name>
        <dbReference type="ChEBI" id="CHEBI:47942"/>
    </cofactor>
</comment>
<comment type="biophysicochemical properties">
    <kinetics>
        <KM evidence="2">537 uM for L-cysteine</KM>
        <text evidence="2">kcat is 415 min(-1) with L-cysteine as substrate.</text>
    </kinetics>
</comment>
<comment type="pathway">
    <text evidence="2">Siderophore biosynthesis.</text>
</comment>
<comment type="domain">
    <text evidence="5">Modular protein that contains a condensation/cyclization domain involved in the cyclization of the cysteine, an adenylation domain which activates the cysteine residue into an aminoacyl-AMP ester, a peptidyl carrier protein (PCP2) domain which bears a phosphopantetheinyl arm to attach the activated cysteine and a thioesterase domain (TE) that may release the newly synthesized peptide from the enzyme.</text>
</comment>
<comment type="similarity">
    <text evidence="4">Belongs to the NRP synthetase family.</text>
</comment>
<name>PCHF_PSEAB</name>
<accession>A0A0H2ZGJ4</accession>
<proteinExistence type="evidence at protein level"/>